<evidence type="ECO:0000255" key="1">
    <source>
        <dbReference type="HAMAP-Rule" id="MF_00323"/>
    </source>
</evidence>
<evidence type="ECO:0000305" key="2"/>
<reference key="1">
    <citation type="journal article" date="1995" name="J. Bacteriol.">
        <title>Cloning and overexpression of the Rhodobacter capsulatus hemH gene.</title>
        <authorList>
            <person name="Kanazireva E."/>
            <person name="Biel A.J."/>
        </authorList>
    </citation>
    <scope>NUCLEOTIDE SEQUENCE [GENOMIC DNA]</scope>
    <source>
        <strain>PAS100</strain>
    </source>
</reference>
<reference key="2">
    <citation type="journal article" date="1996" name="Gene">
        <title>Nucleotide sequence of the Rhodobacter capsulatus hemH gene.</title>
        <authorList>
            <person name="Kanazireva E."/>
            <person name="Biel A.J."/>
        </authorList>
    </citation>
    <scope>NUCLEOTIDE SEQUENCE [GENOMIC DNA]</scope>
    <source>
        <strain>PAS100</strain>
    </source>
</reference>
<feature type="chain" id="PRO_0000175191" description="Ferrochelatase">
    <location>
        <begin position="1"/>
        <end position="351"/>
    </location>
</feature>
<feature type="binding site" evidence="1">
    <location>
        <position position="220"/>
    </location>
    <ligand>
        <name>Fe cation</name>
        <dbReference type="ChEBI" id="CHEBI:24875"/>
    </ligand>
</feature>
<feature type="binding site" evidence="1">
    <location>
        <position position="301"/>
    </location>
    <ligand>
        <name>Fe cation</name>
        <dbReference type="ChEBI" id="CHEBI:24875"/>
    </ligand>
</feature>
<dbReference type="EC" id="4.98.1.1" evidence="1"/>
<dbReference type="EMBL" id="U34391">
    <property type="protein sequence ID" value="AAA88884.1"/>
    <property type="molecule type" value="Genomic_DNA"/>
</dbReference>
<dbReference type="PIR" id="JC4752">
    <property type="entry name" value="JC4752"/>
</dbReference>
<dbReference type="RefSeq" id="WP_013065942.1">
    <property type="nucleotide sequence ID" value="NZ_VIBE01000009.1"/>
</dbReference>
<dbReference type="SMR" id="Q59735"/>
<dbReference type="GeneID" id="31489154"/>
<dbReference type="OMA" id="DPYHCEC"/>
<dbReference type="UniPathway" id="UPA00252">
    <property type="reaction ID" value="UER00325"/>
</dbReference>
<dbReference type="GO" id="GO:0005737">
    <property type="term" value="C:cytoplasm"/>
    <property type="evidence" value="ECO:0007669"/>
    <property type="project" value="UniProtKB-SubCell"/>
</dbReference>
<dbReference type="GO" id="GO:0004325">
    <property type="term" value="F:ferrochelatase activity"/>
    <property type="evidence" value="ECO:0007669"/>
    <property type="project" value="UniProtKB-UniRule"/>
</dbReference>
<dbReference type="GO" id="GO:0046872">
    <property type="term" value="F:metal ion binding"/>
    <property type="evidence" value="ECO:0007669"/>
    <property type="project" value="UniProtKB-KW"/>
</dbReference>
<dbReference type="GO" id="GO:0006783">
    <property type="term" value="P:heme biosynthetic process"/>
    <property type="evidence" value="ECO:0007669"/>
    <property type="project" value="UniProtKB-UniRule"/>
</dbReference>
<dbReference type="CDD" id="cd00419">
    <property type="entry name" value="Ferrochelatase_C"/>
    <property type="match status" value="1"/>
</dbReference>
<dbReference type="CDD" id="cd03411">
    <property type="entry name" value="Ferrochelatase_N"/>
    <property type="match status" value="1"/>
</dbReference>
<dbReference type="FunFam" id="3.40.50.1400:FF:000002">
    <property type="entry name" value="Ferrochelatase"/>
    <property type="match status" value="1"/>
</dbReference>
<dbReference type="Gene3D" id="3.40.50.1400">
    <property type="match status" value="2"/>
</dbReference>
<dbReference type="HAMAP" id="MF_00323">
    <property type="entry name" value="Ferrochelatase"/>
    <property type="match status" value="1"/>
</dbReference>
<dbReference type="InterPro" id="IPR001015">
    <property type="entry name" value="Ferrochelatase"/>
</dbReference>
<dbReference type="InterPro" id="IPR019772">
    <property type="entry name" value="Ferrochelatase_AS"/>
</dbReference>
<dbReference type="InterPro" id="IPR033644">
    <property type="entry name" value="Ferrochelatase_C"/>
</dbReference>
<dbReference type="InterPro" id="IPR033659">
    <property type="entry name" value="Ferrochelatase_N"/>
</dbReference>
<dbReference type="NCBIfam" id="TIGR00109">
    <property type="entry name" value="hemH"/>
    <property type="match status" value="1"/>
</dbReference>
<dbReference type="PANTHER" id="PTHR11108">
    <property type="entry name" value="FERROCHELATASE"/>
    <property type="match status" value="1"/>
</dbReference>
<dbReference type="PANTHER" id="PTHR11108:SF1">
    <property type="entry name" value="FERROCHELATASE, MITOCHONDRIAL"/>
    <property type="match status" value="1"/>
</dbReference>
<dbReference type="Pfam" id="PF00762">
    <property type="entry name" value="Ferrochelatase"/>
    <property type="match status" value="1"/>
</dbReference>
<dbReference type="SUPFAM" id="SSF53800">
    <property type="entry name" value="Chelatase"/>
    <property type="match status" value="1"/>
</dbReference>
<dbReference type="PROSITE" id="PS00534">
    <property type="entry name" value="FERROCHELATASE"/>
    <property type="match status" value="1"/>
</dbReference>
<accession>Q59735</accession>
<name>HEMH_RHOCA</name>
<gene>
    <name evidence="1" type="primary">hemH</name>
</gene>
<keyword id="KW-0963">Cytoplasm</keyword>
<keyword id="KW-0350">Heme biosynthesis</keyword>
<keyword id="KW-0408">Iron</keyword>
<keyword id="KW-0456">Lyase</keyword>
<keyword id="KW-0479">Metal-binding</keyword>
<keyword id="KW-0627">Porphyrin biosynthesis</keyword>
<protein>
    <recommendedName>
        <fullName evidence="1">Ferrochelatase</fullName>
        <ecNumber evidence="1">4.98.1.1</ecNumber>
    </recommendedName>
    <alternativeName>
        <fullName evidence="1">Heme synthase</fullName>
    </alternativeName>
    <alternativeName>
        <fullName evidence="1">Protoheme ferro-lyase</fullName>
    </alternativeName>
</protein>
<proteinExistence type="inferred from homology"/>
<organism>
    <name type="scientific">Rhodobacter capsulatus</name>
    <name type="common">Rhodopseudomonas capsulata</name>
    <dbReference type="NCBI Taxonomy" id="1061"/>
    <lineage>
        <taxon>Bacteria</taxon>
        <taxon>Pseudomonadati</taxon>
        <taxon>Pseudomonadota</taxon>
        <taxon>Alphaproteobacteria</taxon>
        <taxon>Rhodobacterales</taxon>
        <taxon>Rhodobacter group</taxon>
        <taxon>Rhodobacter</taxon>
    </lineage>
</organism>
<comment type="function">
    <text evidence="1">Catalyzes the ferrous insertion into protoporphyrin IX.</text>
</comment>
<comment type="catalytic activity">
    <reaction evidence="1">
        <text>heme b + 2 H(+) = protoporphyrin IX + Fe(2+)</text>
        <dbReference type="Rhea" id="RHEA:22584"/>
        <dbReference type="ChEBI" id="CHEBI:15378"/>
        <dbReference type="ChEBI" id="CHEBI:29033"/>
        <dbReference type="ChEBI" id="CHEBI:57306"/>
        <dbReference type="ChEBI" id="CHEBI:60344"/>
        <dbReference type="EC" id="4.98.1.1"/>
    </reaction>
</comment>
<comment type="pathway">
    <text evidence="1">Porphyrin-containing compound metabolism; protoheme biosynthesis; protoheme from protoporphyrin-IX: step 1/1.</text>
</comment>
<comment type="subcellular location">
    <subcellularLocation>
        <location evidence="1">Cytoplasm</location>
    </subcellularLocation>
</comment>
<comment type="similarity">
    <text evidence="1 2">Belongs to the ferrochelatase family.</text>
</comment>
<sequence length="351" mass="39955">MTIANRILPHAPADHPPVPVPRVGVLLANLGTPDATDYWSMRRYLNEFLSDRRVIDYPIWKWQPLLQLIILSKRPFTSGNNYRSIWNEERDESPLMTITRDQVRKLRAAVETRYGAGNVVVDFCMRYGNPSTRDVLDDMLAQGCERILFLPLYPQYAGATSATANDQFFRALMQVKRQPAARTVPEYFARPSYIEALASSVERVYATLDTRPDVLVASYHGMPKRYHREGDPYHCQCQKTSRLLRERLGWGPDSIDTTFQSVFGTEEWLRPYTVEHVVQLAEAGKKNIAVISPAFSADCIETLEEINGEIREAFEHAGGESFTYVPCLNDDDLHIAALLEVVEENLAGWID</sequence>